<feature type="chain" id="PRO_1000098707" description="tRNA dimethylallyltransferase">
    <location>
        <begin position="1"/>
        <end position="313"/>
    </location>
</feature>
<feature type="region of interest" description="Interaction with substrate tRNA" evidence="1">
    <location>
        <begin position="42"/>
        <end position="45"/>
    </location>
</feature>
<feature type="region of interest" description="Interaction with substrate tRNA" evidence="1">
    <location>
        <begin position="166"/>
        <end position="170"/>
    </location>
</feature>
<feature type="region of interest" description="Interaction with substrate tRNA" evidence="1">
    <location>
        <begin position="247"/>
        <end position="252"/>
    </location>
</feature>
<feature type="binding site" evidence="1">
    <location>
        <begin position="17"/>
        <end position="24"/>
    </location>
    <ligand>
        <name>ATP</name>
        <dbReference type="ChEBI" id="CHEBI:30616"/>
    </ligand>
</feature>
<feature type="binding site" evidence="1">
    <location>
        <begin position="19"/>
        <end position="24"/>
    </location>
    <ligand>
        <name>substrate</name>
    </ligand>
</feature>
<feature type="site" description="Interaction with substrate tRNA" evidence="1">
    <location>
        <position position="108"/>
    </location>
</feature>
<feature type="site" description="Interaction with substrate tRNA" evidence="1">
    <location>
        <position position="130"/>
    </location>
</feature>
<dbReference type="EC" id="2.5.1.75" evidence="1"/>
<dbReference type="EMBL" id="CP000950">
    <property type="protein sequence ID" value="ACA70067.1"/>
    <property type="molecule type" value="Genomic_DNA"/>
</dbReference>
<dbReference type="RefSeq" id="WP_002209149.1">
    <property type="nucleotide sequence ID" value="NZ_CP009792.1"/>
</dbReference>
<dbReference type="SMR" id="B1JMP0"/>
<dbReference type="GeneID" id="57974235"/>
<dbReference type="KEGG" id="ypy:YPK_3800"/>
<dbReference type="PATRIC" id="fig|502800.11.peg.148"/>
<dbReference type="GO" id="GO:0005524">
    <property type="term" value="F:ATP binding"/>
    <property type="evidence" value="ECO:0007669"/>
    <property type="project" value="UniProtKB-UniRule"/>
</dbReference>
<dbReference type="GO" id="GO:0052381">
    <property type="term" value="F:tRNA dimethylallyltransferase activity"/>
    <property type="evidence" value="ECO:0007669"/>
    <property type="project" value="UniProtKB-UniRule"/>
</dbReference>
<dbReference type="GO" id="GO:0006400">
    <property type="term" value="P:tRNA modification"/>
    <property type="evidence" value="ECO:0007669"/>
    <property type="project" value="TreeGrafter"/>
</dbReference>
<dbReference type="FunFam" id="1.10.20.140:FF:000001">
    <property type="entry name" value="tRNA dimethylallyltransferase"/>
    <property type="match status" value="1"/>
</dbReference>
<dbReference type="Gene3D" id="1.10.20.140">
    <property type="match status" value="1"/>
</dbReference>
<dbReference type="Gene3D" id="3.40.50.300">
    <property type="entry name" value="P-loop containing nucleotide triphosphate hydrolases"/>
    <property type="match status" value="1"/>
</dbReference>
<dbReference type="HAMAP" id="MF_00185">
    <property type="entry name" value="IPP_trans"/>
    <property type="match status" value="1"/>
</dbReference>
<dbReference type="InterPro" id="IPR039657">
    <property type="entry name" value="Dimethylallyltransferase"/>
</dbReference>
<dbReference type="InterPro" id="IPR018022">
    <property type="entry name" value="IPT"/>
</dbReference>
<dbReference type="InterPro" id="IPR027417">
    <property type="entry name" value="P-loop_NTPase"/>
</dbReference>
<dbReference type="NCBIfam" id="TIGR00174">
    <property type="entry name" value="miaA"/>
    <property type="match status" value="1"/>
</dbReference>
<dbReference type="PANTHER" id="PTHR11088">
    <property type="entry name" value="TRNA DIMETHYLALLYLTRANSFERASE"/>
    <property type="match status" value="1"/>
</dbReference>
<dbReference type="PANTHER" id="PTHR11088:SF60">
    <property type="entry name" value="TRNA DIMETHYLALLYLTRANSFERASE"/>
    <property type="match status" value="1"/>
</dbReference>
<dbReference type="Pfam" id="PF01715">
    <property type="entry name" value="IPPT"/>
    <property type="match status" value="1"/>
</dbReference>
<dbReference type="SUPFAM" id="SSF52540">
    <property type="entry name" value="P-loop containing nucleoside triphosphate hydrolases"/>
    <property type="match status" value="1"/>
</dbReference>
<evidence type="ECO:0000255" key="1">
    <source>
        <dbReference type="HAMAP-Rule" id="MF_00185"/>
    </source>
</evidence>
<comment type="function">
    <text evidence="1">Catalyzes the transfer of a dimethylallyl group onto the adenine at position 37 in tRNAs that read codons beginning with uridine, leading to the formation of N6-(dimethylallyl)adenosine (i(6)A).</text>
</comment>
<comment type="catalytic activity">
    <reaction evidence="1">
        <text>adenosine(37) in tRNA + dimethylallyl diphosphate = N(6)-dimethylallyladenosine(37) in tRNA + diphosphate</text>
        <dbReference type="Rhea" id="RHEA:26482"/>
        <dbReference type="Rhea" id="RHEA-COMP:10162"/>
        <dbReference type="Rhea" id="RHEA-COMP:10375"/>
        <dbReference type="ChEBI" id="CHEBI:33019"/>
        <dbReference type="ChEBI" id="CHEBI:57623"/>
        <dbReference type="ChEBI" id="CHEBI:74411"/>
        <dbReference type="ChEBI" id="CHEBI:74415"/>
        <dbReference type="EC" id="2.5.1.75"/>
    </reaction>
</comment>
<comment type="cofactor">
    <cofactor evidence="1">
        <name>Mg(2+)</name>
        <dbReference type="ChEBI" id="CHEBI:18420"/>
    </cofactor>
</comment>
<comment type="subunit">
    <text evidence="1">Monomer.</text>
</comment>
<comment type="similarity">
    <text evidence="1">Belongs to the IPP transferase family.</text>
</comment>
<proteinExistence type="inferred from homology"/>
<keyword id="KW-0067">ATP-binding</keyword>
<keyword id="KW-0460">Magnesium</keyword>
<keyword id="KW-0547">Nucleotide-binding</keyword>
<keyword id="KW-0808">Transferase</keyword>
<keyword id="KW-0819">tRNA processing</keyword>
<accession>B1JMP0</accession>
<reference key="1">
    <citation type="submission" date="2008-02" db="EMBL/GenBank/DDBJ databases">
        <title>Complete sequence of Yersinia pseudotuberculosis YPIII.</title>
        <authorList>
            <consortium name="US DOE Joint Genome Institute"/>
            <person name="Copeland A."/>
            <person name="Lucas S."/>
            <person name="Lapidus A."/>
            <person name="Glavina del Rio T."/>
            <person name="Dalin E."/>
            <person name="Tice H."/>
            <person name="Bruce D."/>
            <person name="Goodwin L."/>
            <person name="Pitluck S."/>
            <person name="Munk A.C."/>
            <person name="Brettin T."/>
            <person name="Detter J.C."/>
            <person name="Han C."/>
            <person name="Tapia R."/>
            <person name="Schmutz J."/>
            <person name="Larimer F."/>
            <person name="Land M."/>
            <person name="Hauser L."/>
            <person name="Challacombe J.F."/>
            <person name="Green L."/>
            <person name="Lindler L.E."/>
            <person name="Nikolich M.P."/>
            <person name="Richardson P."/>
        </authorList>
    </citation>
    <scope>NUCLEOTIDE SEQUENCE [LARGE SCALE GENOMIC DNA]</scope>
    <source>
        <strain>YPIII</strain>
    </source>
</reference>
<name>MIAA_YERPY</name>
<gene>
    <name evidence="1" type="primary">miaA</name>
    <name type="ordered locus">YPK_3800</name>
</gene>
<protein>
    <recommendedName>
        <fullName evidence="1">tRNA dimethylallyltransferase</fullName>
        <ecNumber evidence="1">2.5.1.75</ecNumber>
    </recommendedName>
    <alternativeName>
        <fullName evidence="1">Dimethylallyl diphosphate:tRNA dimethylallyltransferase</fullName>
        <shortName evidence="1">DMAPP:tRNA dimethylallyltransferase</shortName>
        <shortName evidence="1">DMATase</shortName>
    </alternativeName>
    <alternativeName>
        <fullName evidence="1">Isopentenyl-diphosphate:tRNA isopentenyltransferase</fullName>
        <shortName evidence="1">IPP transferase</shortName>
        <shortName evidence="1">IPPT</shortName>
        <shortName evidence="1">IPTase</shortName>
    </alternativeName>
</protein>
<organism>
    <name type="scientific">Yersinia pseudotuberculosis serotype O:3 (strain YPIII)</name>
    <dbReference type="NCBI Taxonomy" id="502800"/>
    <lineage>
        <taxon>Bacteria</taxon>
        <taxon>Pseudomonadati</taxon>
        <taxon>Pseudomonadota</taxon>
        <taxon>Gammaproteobacteria</taxon>
        <taxon>Enterobacterales</taxon>
        <taxon>Yersiniaceae</taxon>
        <taxon>Yersinia</taxon>
    </lineage>
</organism>
<sequence length="313" mass="34785">MNDIENLDRPPAIFIMGPTASGKTALSIALRQRLPVELVSVDSALIYRGMDIGTAKPSAQELALAPHRLIDIRDPAESYSAADFRKDALKEMADITAAGRIPLLVGGTMLYFKALLDGLSPLPSADPQVRQRIEQQASELGWGALHQQLAVIDPVAAARIHPNDPQRLSRALEVFFISGKTLTELTKISGETLPYRVHQFAIAPASRELLHQRIELRFHQMLDAGFEAEARVLFDRGDLHTDLPAIRCVGYRQMWSYLSGEIDYNDMVYRGVCATRQLAKRQMTWLRGWSSVQWLDSDKPGEALDSVIQVVSA</sequence>